<organism>
    <name type="scientific">Campylobacter jejuni (strain RM1221)</name>
    <dbReference type="NCBI Taxonomy" id="195099"/>
    <lineage>
        <taxon>Bacteria</taxon>
        <taxon>Pseudomonadati</taxon>
        <taxon>Campylobacterota</taxon>
        <taxon>Epsilonproteobacteria</taxon>
        <taxon>Campylobacterales</taxon>
        <taxon>Campylobacteraceae</taxon>
        <taxon>Campylobacter</taxon>
    </lineage>
</organism>
<gene>
    <name evidence="1" type="primary">rny</name>
    <name type="ordered locus">CJE1343</name>
</gene>
<dbReference type="EC" id="3.1.-.-" evidence="1"/>
<dbReference type="EMBL" id="CP000025">
    <property type="protein sequence ID" value="AAW35664.1"/>
    <property type="molecule type" value="Genomic_DNA"/>
</dbReference>
<dbReference type="RefSeq" id="WP_002867373.1">
    <property type="nucleotide sequence ID" value="NC_003912.7"/>
</dbReference>
<dbReference type="SMR" id="Q5HTQ5"/>
<dbReference type="KEGG" id="cjr:CJE1343"/>
<dbReference type="HOGENOM" id="CLU_028328_1_0_7"/>
<dbReference type="GO" id="GO:0005886">
    <property type="term" value="C:plasma membrane"/>
    <property type="evidence" value="ECO:0007669"/>
    <property type="project" value="UniProtKB-SubCell"/>
</dbReference>
<dbReference type="GO" id="GO:0003723">
    <property type="term" value="F:RNA binding"/>
    <property type="evidence" value="ECO:0007669"/>
    <property type="project" value="UniProtKB-UniRule"/>
</dbReference>
<dbReference type="GO" id="GO:0004521">
    <property type="term" value="F:RNA endonuclease activity"/>
    <property type="evidence" value="ECO:0007669"/>
    <property type="project" value="UniProtKB-UniRule"/>
</dbReference>
<dbReference type="GO" id="GO:0006402">
    <property type="term" value="P:mRNA catabolic process"/>
    <property type="evidence" value="ECO:0007669"/>
    <property type="project" value="UniProtKB-UniRule"/>
</dbReference>
<dbReference type="CDD" id="cd00077">
    <property type="entry name" value="HDc"/>
    <property type="match status" value="1"/>
</dbReference>
<dbReference type="CDD" id="cd22431">
    <property type="entry name" value="KH-I_RNaseY"/>
    <property type="match status" value="1"/>
</dbReference>
<dbReference type="Gene3D" id="1.10.3210.10">
    <property type="entry name" value="Hypothetical protein af1432"/>
    <property type="match status" value="1"/>
</dbReference>
<dbReference type="Gene3D" id="3.30.1370.10">
    <property type="entry name" value="K Homology domain, type 1"/>
    <property type="match status" value="1"/>
</dbReference>
<dbReference type="HAMAP" id="MF_00335">
    <property type="entry name" value="RNase_Y"/>
    <property type="match status" value="1"/>
</dbReference>
<dbReference type="InterPro" id="IPR003607">
    <property type="entry name" value="HD/PDEase_dom"/>
</dbReference>
<dbReference type="InterPro" id="IPR006674">
    <property type="entry name" value="HD_domain"/>
</dbReference>
<dbReference type="InterPro" id="IPR006675">
    <property type="entry name" value="HDIG_dom"/>
</dbReference>
<dbReference type="InterPro" id="IPR036612">
    <property type="entry name" value="KH_dom_type_1_sf"/>
</dbReference>
<dbReference type="InterPro" id="IPR017705">
    <property type="entry name" value="Ribonuclease_Y"/>
</dbReference>
<dbReference type="InterPro" id="IPR022711">
    <property type="entry name" value="RNase_Y_N"/>
</dbReference>
<dbReference type="NCBIfam" id="TIGR00277">
    <property type="entry name" value="HDIG"/>
    <property type="match status" value="1"/>
</dbReference>
<dbReference type="NCBIfam" id="TIGR03319">
    <property type="entry name" value="RNase_Y"/>
    <property type="match status" value="1"/>
</dbReference>
<dbReference type="PANTHER" id="PTHR12826">
    <property type="entry name" value="RIBONUCLEASE Y"/>
    <property type="match status" value="1"/>
</dbReference>
<dbReference type="PANTHER" id="PTHR12826:SF15">
    <property type="entry name" value="RIBONUCLEASE Y"/>
    <property type="match status" value="1"/>
</dbReference>
<dbReference type="Pfam" id="PF01966">
    <property type="entry name" value="HD"/>
    <property type="match status" value="1"/>
</dbReference>
<dbReference type="Pfam" id="PF12072">
    <property type="entry name" value="RNase_Y_N"/>
    <property type="match status" value="1"/>
</dbReference>
<dbReference type="SMART" id="SM00471">
    <property type="entry name" value="HDc"/>
    <property type="match status" value="1"/>
</dbReference>
<dbReference type="SUPFAM" id="SSF54791">
    <property type="entry name" value="Eukaryotic type KH-domain (KH-domain type I)"/>
    <property type="match status" value="1"/>
</dbReference>
<dbReference type="SUPFAM" id="SSF109604">
    <property type="entry name" value="HD-domain/PDEase-like"/>
    <property type="match status" value="1"/>
</dbReference>
<dbReference type="PROSITE" id="PS51831">
    <property type="entry name" value="HD"/>
    <property type="match status" value="1"/>
</dbReference>
<proteinExistence type="inferred from homology"/>
<protein>
    <recommendedName>
        <fullName evidence="1">Ribonuclease Y</fullName>
        <shortName evidence="1">RNase Y</shortName>
        <ecNumber evidence="1">3.1.-.-</ecNumber>
    </recommendedName>
</protein>
<accession>Q5HTQ5</accession>
<keyword id="KW-1003">Cell membrane</keyword>
<keyword id="KW-0255">Endonuclease</keyword>
<keyword id="KW-0378">Hydrolase</keyword>
<keyword id="KW-0472">Membrane</keyword>
<keyword id="KW-0540">Nuclease</keyword>
<keyword id="KW-0694">RNA-binding</keyword>
<keyword id="KW-0812">Transmembrane</keyword>
<keyword id="KW-1133">Transmembrane helix</keyword>
<feature type="chain" id="PRO_0000344836" description="Ribonuclease Y">
    <location>
        <begin position="1"/>
        <end position="517"/>
    </location>
</feature>
<feature type="transmembrane region" description="Helical" evidence="1">
    <location>
        <begin position="1"/>
        <end position="21"/>
    </location>
</feature>
<feature type="domain" description="KH" evidence="1">
    <location>
        <begin position="207"/>
        <end position="273"/>
    </location>
</feature>
<feature type="domain" description="HD" evidence="2">
    <location>
        <begin position="333"/>
        <end position="426"/>
    </location>
</feature>
<comment type="function">
    <text evidence="1">Endoribonuclease that initiates mRNA decay.</text>
</comment>
<comment type="subcellular location">
    <subcellularLocation>
        <location evidence="1">Cell membrane</location>
        <topology evidence="1">Single-pass membrane protein</topology>
    </subcellularLocation>
</comment>
<comment type="similarity">
    <text evidence="1">Belongs to the RNase Y family.</text>
</comment>
<name>RNY_CAMJR</name>
<reference key="1">
    <citation type="journal article" date="2005" name="PLoS Biol.">
        <title>Major structural differences and novel potential virulence mechanisms from the genomes of multiple Campylobacter species.</title>
        <authorList>
            <person name="Fouts D.E."/>
            <person name="Mongodin E.F."/>
            <person name="Mandrell R.E."/>
            <person name="Miller W.G."/>
            <person name="Rasko D.A."/>
            <person name="Ravel J."/>
            <person name="Brinkac L.M."/>
            <person name="DeBoy R.T."/>
            <person name="Parker C.T."/>
            <person name="Daugherty S.C."/>
            <person name="Dodson R.J."/>
            <person name="Durkin A.S."/>
            <person name="Madupu R."/>
            <person name="Sullivan S.A."/>
            <person name="Shetty J.U."/>
            <person name="Ayodeji M.A."/>
            <person name="Shvartsbeyn A."/>
            <person name="Schatz M.C."/>
            <person name="Badger J.H."/>
            <person name="Fraser C.M."/>
            <person name="Nelson K.E."/>
        </authorList>
    </citation>
    <scope>NUCLEOTIDE SEQUENCE [LARGE SCALE GENOMIC DNA]</scope>
    <source>
        <strain>RM1221</strain>
    </source>
</reference>
<sequence length="517" mass="57992">MIESLIALIAAIVGLGIGYLVAKKINDAKYEIFVEQAKAKAKAIEYEAELILKDAKNSILNAELEVKKKYEEKTHKIQKDFNQKFDDLSKKEQKLQQEEEKLKEDKEYLCKSQKHIQNLQSDVDKLKNKYQEKLDDVLKILEHSTGLTQNEAKEIILKKVEENSREQIAHIVRKYEEEAKNEAKRKANFIIAQATSRFAGEFAAERLINVINIKNDELKGRIIGKEGRNVKTLEMVLGVDIIIDDTPGAIIVSCFNLYRRAIATKVIELLVEDGRIQPARIEEIHEKVCKEFDSAILEEGETIVMDLGLNKIHPEIVKLIGKLKYRASYGQNALAHSLEVAHLAGIIAAECGGDENLARRAGILHDIGKALTHDFEGSHVDLGAELCKRYKEHPVVINAIYAHHGHEEATSIESAAVCAADTLSAARPGARREVLEAFLKRVSELEDIAKSKEGIKNAYAINAGREIRVIANAQLVNDDESVLLAKEIAAEIQEKMQYPGEIKVNVIRELRAVEYAK</sequence>
<evidence type="ECO:0000255" key="1">
    <source>
        <dbReference type="HAMAP-Rule" id="MF_00335"/>
    </source>
</evidence>
<evidence type="ECO:0000255" key="2">
    <source>
        <dbReference type="PROSITE-ProRule" id="PRU01175"/>
    </source>
</evidence>